<organism>
    <name type="scientific">Geobacillus kaustophilus (strain HTA426)</name>
    <dbReference type="NCBI Taxonomy" id="235909"/>
    <lineage>
        <taxon>Bacteria</taxon>
        <taxon>Bacillati</taxon>
        <taxon>Bacillota</taxon>
        <taxon>Bacilli</taxon>
        <taxon>Bacillales</taxon>
        <taxon>Anoxybacillaceae</taxon>
        <taxon>Geobacillus</taxon>
        <taxon>Geobacillus thermoleovorans group</taxon>
    </lineage>
</organism>
<reference key="1">
    <citation type="journal article" date="2004" name="Nucleic Acids Res.">
        <title>Thermoadaptation trait revealed by the genome sequence of thermophilic Geobacillus kaustophilus.</title>
        <authorList>
            <person name="Takami H."/>
            <person name="Takaki Y."/>
            <person name="Chee G.-J."/>
            <person name="Nishi S."/>
            <person name="Shimamura S."/>
            <person name="Suzuki H."/>
            <person name="Matsui S."/>
            <person name="Uchiyama I."/>
        </authorList>
    </citation>
    <scope>NUCLEOTIDE SEQUENCE [LARGE SCALE GENOMIC DNA]</scope>
    <source>
        <strain>HTA426</strain>
    </source>
</reference>
<name>AZOR_GEOKA</name>
<accession>Q5KUC3</accession>
<dbReference type="EC" id="1.6.5.-" evidence="1"/>
<dbReference type="EC" id="1.7.1.17" evidence="1"/>
<dbReference type="EMBL" id="BA000043">
    <property type="protein sequence ID" value="BAD77713.1"/>
    <property type="molecule type" value="Genomic_DNA"/>
</dbReference>
<dbReference type="RefSeq" id="WP_011232895.1">
    <property type="nucleotide sequence ID" value="NC_006510.1"/>
</dbReference>
<dbReference type="SMR" id="Q5KUC3"/>
<dbReference type="STRING" id="235909.GK3428"/>
<dbReference type="KEGG" id="gka:GK3428"/>
<dbReference type="eggNOG" id="COG1182">
    <property type="taxonomic scope" value="Bacteria"/>
</dbReference>
<dbReference type="HOGENOM" id="CLU_088964_3_1_9"/>
<dbReference type="Proteomes" id="UP000001172">
    <property type="component" value="Chromosome"/>
</dbReference>
<dbReference type="GO" id="GO:0009055">
    <property type="term" value="F:electron transfer activity"/>
    <property type="evidence" value="ECO:0007669"/>
    <property type="project" value="UniProtKB-UniRule"/>
</dbReference>
<dbReference type="GO" id="GO:0010181">
    <property type="term" value="F:FMN binding"/>
    <property type="evidence" value="ECO:0007669"/>
    <property type="project" value="UniProtKB-UniRule"/>
</dbReference>
<dbReference type="GO" id="GO:0016652">
    <property type="term" value="F:oxidoreductase activity, acting on NAD(P)H as acceptor"/>
    <property type="evidence" value="ECO:0007669"/>
    <property type="project" value="UniProtKB-UniRule"/>
</dbReference>
<dbReference type="GO" id="GO:0016655">
    <property type="term" value="F:oxidoreductase activity, acting on NAD(P)H, quinone or similar compound as acceptor"/>
    <property type="evidence" value="ECO:0007669"/>
    <property type="project" value="InterPro"/>
</dbReference>
<dbReference type="Gene3D" id="3.40.50.360">
    <property type="match status" value="1"/>
</dbReference>
<dbReference type="HAMAP" id="MF_01216">
    <property type="entry name" value="Azoreductase_type1"/>
    <property type="match status" value="1"/>
</dbReference>
<dbReference type="InterPro" id="IPR003680">
    <property type="entry name" value="Flavodoxin_fold"/>
</dbReference>
<dbReference type="InterPro" id="IPR029039">
    <property type="entry name" value="Flavoprotein-like_sf"/>
</dbReference>
<dbReference type="InterPro" id="IPR050104">
    <property type="entry name" value="FMN-dep_NADH:Q_OxRdtase_AzoR1"/>
</dbReference>
<dbReference type="InterPro" id="IPR023048">
    <property type="entry name" value="NADH:quinone_OxRdtase_FMN_depd"/>
</dbReference>
<dbReference type="NCBIfam" id="NF010075">
    <property type="entry name" value="PRK13556.1"/>
    <property type="match status" value="1"/>
</dbReference>
<dbReference type="PANTHER" id="PTHR43741">
    <property type="entry name" value="FMN-DEPENDENT NADH-AZOREDUCTASE 1"/>
    <property type="match status" value="1"/>
</dbReference>
<dbReference type="PANTHER" id="PTHR43741:SF7">
    <property type="entry name" value="FMN-DEPENDENT NADH:QUINONE OXIDOREDUCTASE"/>
    <property type="match status" value="1"/>
</dbReference>
<dbReference type="Pfam" id="PF02525">
    <property type="entry name" value="Flavodoxin_2"/>
    <property type="match status" value="1"/>
</dbReference>
<dbReference type="SUPFAM" id="SSF52218">
    <property type="entry name" value="Flavoproteins"/>
    <property type="match status" value="1"/>
</dbReference>
<protein>
    <recommendedName>
        <fullName evidence="1">FMN-dependent NADH:quinone oxidoreductase</fullName>
        <ecNumber evidence="1">1.6.5.-</ecNumber>
    </recommendedName>
    <alternativeName>
        <fullName evidence="1">Azo-dye reductase</fullName>
    </alternativeName>
    <alternativeName>
        <fullName evidence="1">FMN-dependent NADH-azo compound oxidoreductase</fullName>
    </alternativeName>
    <alternativeName>
        <fullName evidence="1">FMN-dependent NADH-azoreductase</fullName>
        <ecNumber evidence="1">1.7.1.17</ecNumber>
    </alternativeName>
</protein>
<comment type="function">
    <text evidence="1">Quinone reductase that provides resistance to thiol-specific stress caused by electrophilic quinones.</text>
</comment>
<comment type="function">
    <text evidence="1">Also exhibits azoreductase activity. Catalyzes the reductive cleavage of the azo bond in aromatic azo compounds to the corresponding amines.</text>
</comment>
<comment type="catalytic activity">
    <reaction evidence="1">
        <text>2 a quinone + NADH + H(+) = 2 a 1,4-benzosemiquinone + NAD(+)</text>
        <dbReference type="Rhea" id="RHEA:65952"/>
        <dbReference type="ChEBI" id="CHEBI:15378"/>
        <dbReference type="ChEBI" id="CHEBI:57540"/>
        <dbReference type="ChEBI" id="CHEBI:57945"/>
        <dbReference type="ChEBI" id="CHEBI:132124"/>
        <dbReference type="ChEBI" id="CHEBI:134225"/>
    </reaction>
</comment>
<comment type="catalytic activity">
    <reaction evidence="1">
        <text>N,N-dimethyl-1,4-phenylenediamine + anthranilate + 2 NAD(+) = 2-(4-dimethylaminophenyl)diazenylbenzoate + 2 NADH + 2 H(+)</text>
        <dbReference type="Rhea" id="RHEA:55872"/>
        <dbReference type="ChEBI" id="CHEBI:15378"/>
        <dbReference type="ChEBI" id="CHEBI:15783"/>
        <dbReference type="ChEBI" id="CHEBI:16567"/>
        <dbReference type="ChEBI" id="CHEBI:57540"/>
        <dbReference type="ChEBI" id="CHEBI:57945"/>
        <dbReference type="ChEBI" id="CHEBI:71579"/>
        <dbReference type="EC" id="1.7.1.17"/>
    </reaction>
</comment>
<comment type="cofactor">
    <cofactor evidence="1">
        <name>FMN</name>
        <dbReference type="ChEBI" id="CHEBI:58210"/>
    </cofactor>
    <text evidence="1">Binds 1 FMN per subunit.</text>
</comment>
<comment type="subunit">
    <text evidence="1">Homodimer.</text>
</comment>
<comment type="similarity">
    <text evidence="1">Belongs to the azoreductase type 1 family.</text>
</comment>
<feature type="chain" id="PRO_0000245918" description="FMN-dependent NADH:quinone oxidoreductase">
    <location>
        <begin position="1"/>
        <end position="211"/>
    </location>
</feature>
<feature type="binding site" evidence="1">
    <location>
        <begin position="17"/>
        <end position="19"/>
    </location>
    <ligand>
        <name>FMN</name>
        <dbReference type="ChEBI" id="CHEBI:58210"/>
    </ligand>
</feature>
<feature type="binding site" evidence="1">
    <location>
        <begin position="102"/>
        <end position="105"/>
    </location>
    <ligand>
        <name>FMN</name>
        <dbReference type="ChEBI" id="CHEBI:58210"/>
    </ligand>
</feature>
<proteinExistence type="inferred from homology"/>
<gene>
    <name evidence="1" type="primary">azoR</name>
    <name type="ordered locus">GK3428</name>
</gene>
<keyword id="KW-0285">Flavoprotein</keyword>
<keyword id="KW-0288">FMN</keyword>
<keyword id="KW-0520">NAD</keyword>
<keyword id="KW-0560">Oxidoreductase</keyword>
<keyword id="KW-1185">Reference proteome</keyword>
<sequence length="211" mass="23717">MTKVLYITAHPHDDTQSYSMAVGKAFIETYKQVHPDHEVIHLDLYKEYIPEIDVDVFSGWGKLRSGKSFEELSDEEKAKVGRMNELCEQFISADKYVFVTPMWNFSFPPVLKAYIDAVAVAGKTFKYTEQGPVGLLTDKKALHIQARGGFYSEGPAAEMEMGHRYLSVIMQFFGVPSFEGLFVEGHAAVPEKAEEIKANAIARAKDLAHTF</sequence>
<evidence type="ECO:0000255" key="1">
    <source>
        <dbReference type="HAMAP-Rule" id="MF_01216"/>
    </source>
</evidence>